<evidence type="ECO:0000255" key="1">
    <source>
        <dbReference type="HAMAP-Rule" id="MF_00181"/>
    </source>
</evidence>
<gene>
    <name evidence="1" type="primary">pepA</name>
    <name type="ordered locus">Xfasm12_0114</name>
</gene>
<dbReference type="EC" id="3.4.11.1" evidence="1"/>
<dbReference type="EC" id="3.4.11.10" evidence="1"/>
<dbReference type="EMBL" id="CP000941">
    <property type="protein sequence ID" value="ACA11153.1"/>
    <property type="molecule type" value="Genomic_DNA"/>
</dbReference>
<dbReference type="RefSeq" id="WP_004085521.1">
    <property type="nucleotide sequence ID" value="NC_010513.1"/>
</dbReference>
<dbReference type="SMR" id="B0U1L5"/>
<dbReference type="MEROPS" id="M17.003"/>
<dbReference type="KEGG" id="xfm:Xfasm12_0114"/>
<dbReference type="HOGENOM" id="CLU_013734_2_2_6"/>
<dbReference type="GO" id="GO:0005737">
    <property type="term" value="C:cytoplasm"/>
    <property type="evidence" value="ECO:0007669"/>
    <property type="project" value="UniProtKB-SubCell"/>
</dbReference>
<dbReference type="GO" id="GO:0030145">
    <property type="term" value="F:manganese ion binding"/>
    <property type="evidence" value="ECO:0007669"/>
    <property type="project" value="UniProtKB-UniRule"/>
</dbReference>
<dbReference type="GO" id="GO:0070006">
    <property type="term" value="F:metalloaminopeptidase activity"/>
    <property type="evidence" value="ECO:0007669"/>
    <property type="project" value="InterPro"/>
</dbReference>
<dbReference type="GO" id="GO:0006508">
    <property type="term" value="P:proteolysis"/>
    <property type="evidence" value="ECO:0007669"/>
    <property type="project" value="UniProtKB-KW"/>
</dbReference>
<dbReference type="CDD" id="cd00433">
    <property type="entry name" value="Peptidase_M17"/>
    <property type="match status" value="1"/>
</dbReference>
<dbReference type="Gene3D" id="3.40.220.10">
    <property type="entry name" value="Leucine Aminopeptidase, subunit E, domain 1"/>
    <property type="match status" value="1"/>
</dbReference>
<dbReference type="Gene3D" id="3.40.630.10">
    <property type="entry name" value="Zn peptidases"/>
    <property type="match status" value="1"/>
</dbReference>
<dbReference type="HAMAP" id="MF_00181">
    <property type="entry name" value="Cytosol_peptidase_M17"/>
    <property type="match status" value="1"/>
</dbReference>
<dbReference type="InterPro" id="IPR011356">
    <property type="entry name" value="Leucine_aapep/pepB"/>
</dbReference>
<dbReference type="InterPro" id="IPR043472">
    <property type="entry name" value="Macro_dom-like"/>
</dbReference>
<dbReference type="InterPro" id="IPR000819">
    <property type="entry name" value="Peptidase_M17_C"/>
</dbReference>
<dbReference type="InterPro" id="IPR023042">
    <property type="entry name" value="Peptidase_M17_leu_NH2_pept"/>
</dbReference>
<dbReference type="InterPro" id="IPR008283">
    <property type="entry name" value="Peptidase_M17_N"/>
</dbReference>
<dbReference type="NCBIfam" id="NF002074">
    <property type="entry name" value="PRK00913.1-4"/>
    <property type="match status" value="1"/>
</dbReference>
<dbReference type="PANTHER" id="PTHR11963:SF23">
    <property type="entry name" value="CYTOSOL AMINOPEPTIDASE"/>
    <property type="match status" value="1"/>
</dbReference>
<dbReference type="PANTHER" id="PTHR11963">
    <property type="entry name" value="LEUCINE AMINOPEPTIDASE-RELATED"/>
    <property type="match status" value="1"/>
</dbReference>
<dbReference type="Pfam" id="PF00883">
    <property type="entry name" value="Peptidase_M17"/>
    <property type="match status" value="1"/>
</dbReference>
<dbReference type="Pfam" id="PF02789">
    <property type="entry name" value="Peptidase_M17_N"/>
    <property type="match status" value="1"/>
</dbReference>
<dbReference type="PRINTS" id="PR00481">
    <property type="entry name" value="LAMNOPPTDASE"/>
</dbReference>
<dbReference type="SUPFAM" id="SSF52949">
    <property type="entry name" value="Macro domain-like"/>
    <property type="match status" value="1"/>
</dbReference>
<dbReference type="SUPFAM" id="SSF53187">
    <property type="entry name" value="Zn-dependent exopeptidases"/>
    <property type="match status" value="1"/>
</dbReference>
<dbReference type="PROSITE" id="PS00631">
    <property type="entry name" value="CYTOSOL_AP"/>
    <property type="match status" value="1"/>
</dbReference>
<proteinExistence type="inferred from homology"/>
<reference key="1">
    <citation type="journal article" date="2010" name="J. Bacteriol.">
        <title>Whole genome sequences of two Xylella fastidiosa strains (M12 and M23) causing almond leaf scorch disease in California.</title>
        <authorList>
            <person name="Chen J."/>
            <person name="Xie G."/>
            <person name="Han S."/>
            <person name="Chertkov O."/>
            <person name="Sims D."/>
            <person name="Civerolo E.L."/>
        </authorList>
    </citation>
    <scope>NUCLEOTIDE SEQUENCE [LARGE SCALE GENOMIC DNA]</scope>
    <source>
        <strain>M12</strain>
    </source>
</reference>
<sequence>MALQFQLNQTTPQTVTTDCVIVGIYADKTLSPTAKTLDAASGGRITALTARGDLTGKSGTSALLHDLNGVTAPRVLVVGLGEADKFGAGQYIKAVGDAVRALKDAPVTHALLTLSELPVKDRNAAWNIHQAVIAADHAAYRYTATLGTSRKKAEESGLITLAIHGQETSGLTLGQAIAEGVEYARALGNLPPNICTPAYLAETTAHFAATHPGATCEILDESNMEALGMGALLAVARGSANRPHLIVLKWNGGGDARPYVLVGKGITFDTGGVNLKTQGGIEEMKYDMCGGAAVIGTFVAAVKVRLPLNLIVIVPAVENAIDGNAYRPSDVITSMSGKTIEVGNTDAEGRLILCDALTYAERFKPEALIDVATLTGACMIALGRAATGLMTHHDDLANELLTAGEHVHDRAWRLPLWDEYQNLLDSTFADVYNIGGRWGGAITAGCFLSRFTEGQRWAHLDIAGSASNEGKRGMATGRPVGLLTQWLVDRC</sequence>
<protein>
    <recommendedName>
        <fullName evidence="1">Probable cytosol aminopeptidase</fullName>
        <ecNumber evidence="1">3.4.11.1</ecNumber>
    </recommendedName>
    <alternativeName>
        <fullName evidence="1">Leucine aminopeptidase</fullName>
        <shortName evidence="1">LAP</shortName>
        <ecNumber evidence="1">3.4.11.10</ecNumber>
    </alternativeName>
    <alternativeName>
        <fullName evidence="1">Leucyl aminopeptidase</fullName>
    </alternativeName>
</protein>
<organism>
    <name type="scientific">Xylella fastidiosa (strain M12)</name>
    <dbReference type="NCBI Taxonomy" id="405440"/>
    <lineage>
        <taxon>Bacteria</taxon>
        <taxon>Pseudomonadati</taxon>
        <taxon>Pseudomonadota</taxon>
        <taxon>Gammaproteobacteria</taxon>
        <taxon>Lysobacterales</taxon>
        <taxon>Lysobacteraceae</taxon>
        <taxon>Xylella</taxon>
    </lineage>
</organism>
<accession>B0U1L5</accession>
<feature type="chain" id="PRO_1000098363" description="Probable cytosol aminopeptidase">
    <location>
        <begin position="1"/>
        <end position="491"/>
    </location>
</feature>
<feature type="active site" evidence="1">
    <location>
        <position position="276"/>
    </location>
</feature>
<feature type="active site" evidence="1">
    <location>
        <position position="350"/>
    </location>
</feature>
<feature type="binding site" evidence="1">
    <location>
        <position position="264"/>
    </location>
    <ligand>
        <name>Mn(2+)</name>
        <dbReference type="ChEBI" id="CHEBI:29035"/>
        <label>2</label>
    </ligand>
</feature>
<feature type="binding site" evidence="1">
    <location>
        <position position="269"/>
    </location>
    <ligand>
        <name>Mn(2+)</name>
        <dbReference type="ChEBI" id="CHEBI:29035"/>
        <label>1</label>
    </ligand>
</feature>
<feature type="binding site" evidence="1">
    <location>
        <position position="269"/>
    </location>
    <ligand>
        <name>Mn(2+)</name>
        <dbReference type="ChEBI" id="CHEBI:29035"/>
        <label>2</label>
    </ligand>
</feature>
<feature type="binding site" evidence="1">
    <location>
        <position position="287"/>
    </location>
    <ligand>
        <name>Mn(2+)</name>
        <dbReference type="ChEBI" id="CHEBI:29035"/>
        <label>2</label>
    </ligand>
</feature>
<feature type="binding site" evidence="1">
    <location>
        <position position="346"/>
    </location>
    <ligand>
        <name>Mn(2+)</name>
        <dbReference type="ChEBI" id="CHEBI:29035"/>
        <label>1</label>
    </ligand>
</feature>
<feature type="binding site" evidence="1">
    <location>
        <position position="348"/>
    </location>
    <ligand>
        <name>Mn(2+)</name>
        <dbReference type="ChEBI" id="CHEBI:29035"/>
        <label>1</label>
    </ligand>
</feature>
<feature type="binding site" evidence="1">
    <location>
        <position position="348"/>
    </location>
    <ligand>
        <name>Mn(2+)</name>
        <dbReference type="ChEBI" id="CHEBI:29035"/>
        <label>2</label>
    </ligand>
</feature>
<comment type="function">
    <text evidence="1">Presumably involved in the processing and regular turnover of intracellular proteins. Catalyzes the removal of unsubstituted N-terminal amino acids from various peptides.</text>
</comment>
<comment type="catalytic activity">
    <reaction evidence="1">
        <text>Release of an N-terminal amino acid, Xaa-|-Yaa-, in which Xaa is preferably Leu, but may be other amino acids including Pro although not Arg or Lys, and Yaa may be Pro. Amino acid amides and methyl esters are also readily hydrolyzed, but rates on arylamides are exceedingly low.</text>
        <dbReference type="EC" id="3.4.11.1"/>
    </reaction>
</comment>
<comment type="catalytic activity">
    <reaction evidence="1">
        <text>Release of an N-terminal amino acid, preferentially leucine, but not glutamic or aspartic acids.</text>
        <dbReference type="EC" id="3.4.11.10"/>
    </reaction>
</comment>
<comment type="cofactor">
    <cofactor evidence="1">
        <name>Mn(2+)</name>
        <dbReference type="ChEBI" id="CHEBI:29035"/>
    </cofactor>
    <text evidence="1">Binds 2 manganese ions per subunit.</text>
</comment>
<comment type="subcellular location">
    <subcellularLocation>
        <location evidence="1">Cytoplasm</location>
    </subcellularLocation>
</comment>
<comment type="similarity">
    <text evidence="1">Belongs to the peptidase M17 family.</text>
</comment>
<name>AMPA_XYLFM</name>
<keyword id="KW-0031">Aminopeptidase</keyword>
<keyword id="KW-0963">Cytoplasm</keyword>
<keyword id="KW-0378">Hydrolase</keyword>
<keyword id="KW-0464">Manganese</keyword>
<keyword id="KW-0479">Metal-binding</keyword>
<keyword id="KW-0645">Protease</keyword>